<keyword id="KW-0030">Aminoacyl-tRNA synthetase</keyword>
<keyword id="KW-0067">ATP-binding</keyword>
<keyword id="KW-0963">Cytoplasm</keyword>
<keyword id="KW-0436">Ligase</keyword>
<keyword id="KW-0547">Nucleotide-binding</keyword>
<keyword id="KW-0648">Protein biosynthesis</keyword>
<keyword id="KW-1185">Reference proteome</keyword>
<reference key="1">
    <citation type="journal article" date="1998" name="Nature">
        <title>The genome sequence of Rickettsia prowazekii and the origin of mitochondria.</title>
        <authorList>
            <person name="Andersson S.G.E."/>
            <person name="Zomorodipour A."/>
            <person name="Andersson J.O."/>
            <person name="Sicheritz-Ponten T."/>
            <person name="Alsmark U.C.M."/>
            <person name="Podowski R.M."/>
            <person name="Naeslund A.K."/>
            <person name="Eriksson A.-S."/>
            <person name="Winkler H.H."/>
            <person name="Kurland C.G."/>
        </authorList>
    </citation>
    <scope>NUCLEOTIDE SEQUENCE [LARGE SCALE GENOMIC DNA]</scope>
    <source>
        <strain>Madrid E</strain>
    </source>
</reference>
<proteinExistence type="inferred from homology"/>
<feature type="chain" id="PRO_0000119641" description="Glutamate--tRNA ligase 2">
    <location>
        <begin position="1"/>
        <end position="470"/>
    </location>
</feature>
<feature type="short sequence motif" description="'HIGH' region" evidence="1">
    <location>
        <begin position="10"/>
        <end position="20"/>
    </location>
</feature>
<feature type="short sequence motif" description="'KMSKS' region" evidence="1">
    <location>
        <begin position="239"/>
        <end position="243"/>
    </location>
</feature>
<feature type="binding site" evidence="1">
    <location>
        <position position="242"/>
    </location>
    <ligand>
        <name>ATP</name>
        <dbReference type="ChEBI" id="CHEBI:30616"/>
    </ligand>
</feature>
<organism>
    <name type="scientific">Rickettsia prowazekii (strain Madrid E)</name>
    <dbReference type="NCBI Taxonomy" id="272947"/>
    <lineage>
        <taxon>Bacteria</taxon>
        <taxon>Pseudomonadati</taxon>
        <taxon>Pseudomonadota</taxon>
        <taxon>Alphaproteobacteria</taxon>
        <taxon>Rickettsiales</taxon>
        <taxon>Rickettsiaceae</taxon>
        <taxon>Rickettsieae</taxon>
        <taxon>Rickettsia</taxon>
        <taxon>typhus group</taxon>
    </lineage>
</organism>
<accession>Q9ZCT8</accession>
<protein>
    <recommendedName>
        <fullName evidence="1">Glutamate--tRNA ligase 2</fullName>
        <ecNumber evidence="1">6.1.1.17</ecNumber>
    </recommendedName>
    <alternativeName>
        <fullName evidence="1">Glutamyl-tRNA synthetase 2</fullName>
        <shortName evidence="1">GluRS 2</shortName>
    </alternativeName>
</protein>
<name>SYE2_RICPR</name>
<comment type="function">
    <text evidence="1">Catalyzes the attachment of glutamate to tRNA(Glu) in a two-step reaction: glutamate is first activated by ATP to form Glu-AMP and then transferred to the acceptor end of tRNA(Glu).</text>
</comment>
<comment type="catalytic activity">
    <reaction evidence="1">
        <text>tRNA(Glu) + L-glutamate + ATP = L-glutamyl-tRNA(Glu) + AMP + diphosphate</text>
        <dbReference type="Rhea" id="RHEA:23540"/>
        <dbReference type="Rhea" id="RHEA-COMP:9663"/>
        <dbReference type="Rhea" id="RHEA-COMP:9680"/>
        <dbReference type="ChEBI" id="CHEBI:29985"/>
        <dbReference type="ChEBI" id="CHEBI:30616"/>
        <dbReference type="ChEBI" id="CHEBI:33019"/>
        <dbReference type="ChEBI" id="CHEBI:78442"/>
        <dbReference type="ChEBI" id="CHEBI:78520"/>
        <dbReference type="ChEBI" id="CHEBI:456215"/>
        <dbReference type="EC" id="6.1.1.17"/>
    </reaction>
</comment>
<comment type="subunit">
    <text evidence="1">Monomer.</text>
</comment>
<comment type="subcellular location">
    <subcellularLocation>
        <location evidence="1">Cytoplasm</location>
    </subcellularLocation>
</comment>
<comment type="similarity">
    <text evidence="1">Belongs to the class-I aminoacyl-tRNA synthetase family. Glutamate--tRNA ligase type 1 subfamily.</text>
</comment>
<sequence>MTNIITRFAPSPTGFLHIGSARTALFNYLFARHNNGKFFLRIEDTDKKRSTKEAVEAIFSGLKWLGLNWDGEVIFQSKRNSLYKEAALKLLKEGKAYYCFTRQEEIAKQRQQALKDKQHFIFNSEWRDKGPSTYPADIKPVIRLKVPREGSITIHDTLQGEIVIENSHIDDMILIRTDGTATYMLAVIVDDHDMGITHIIRGDDHLTNAARQIAIYHAFGYEVPNMTHIPLIHGADGTKLSKRHGALGVEAYKDMGYLPESLCNYLLRLGWSHGDDEIISMNQAIEWFNLASLGKSPSKLDFAKMNSINSHYLRMLDNDSLTSKTVEILKQNYKISEKEVSYIKQAMPSLIVRSETLRDLAQLAYIYLVDSPMIYSQDAKEVINNCDKDLIKQVIENLSKLEQFNKECVQNKFKEIAIYNGLKLNDIMKPVRALITGMTASPSVFEIAETLGKENILKRLKIIYYNNLNF</sequence>
<gene>
    <name evidence="1" type="primary">gltX2</name>
    <name type="ordered locus">RP623</name>
</gene>
<dbReference type="EC" id="6.1.1.17" evidence="1"/>
<dbReference type="EMBL" id="AJ235272">
    <property type="protein sequence ID" value="CAA15066.1"/>
    <property type="molecule type" value="Genomic_DNA"/>
</dbReference>
<dbReference type="PIR" id="H71667">
    <property type="entry name" value="H71667"/>
</dbReference>
<dbReference type="RefSeq" id="NP_220990.1">
    <property type="nucleotide sequence ID" value="NC_000963.1"/>
</dbReference>
<dbReference type="SMR" id="Q9ZCT8"/>
<dbReference type="STRING" id="272947.gene:17555702"/>
<dbReference type="EnsemblBacteria" id="CAA15066">
    <property type="protein sequence ID" value="CAA15066"/>
    <property type="gene ID" value="CAA15066"/>
</dbReference>
<dbReference type="KEGG" id="rpr:RP623"/>
<dbReference type="PATRIC" id="fig|272947.5.peg.643"/>
<dbReference type="eggNOG" id="COG0008">
    <property type="taxonomic scope" value="Bacteria"/>
</dbReference>
<dbReference type="HOGENOM" id="CLU_015768_6_3_5"/>
<dbReference type="OrthoDB" id="9807503at2"/>
<dbReference type="Proteomes" id="UP000002480">
    <property type="component" value="Chromosome"/>
</dbReference>
<dbReference type="GO" id="GO:0005829">
    <property type="term" value="C:cytosol"/>
    <property type="evidence" value="ECO:0007669"/>
    <property type="project" value="TreeGrafter"/>
</dbReference>
<dbReference type="GO" id="GO:0005524">
    <property type="term" value="F:ATP binding"/>
    <property type="evidence" value="ECO:0007669"/>
    <property type="project" value="UniProtKB-UniRule"/>
</dbReference>
<dbReference type="GO" id="GO:0004818">
    <property type="term" value="F:glutamate-tRNA ligase activity"/>
    <property type="evidence" value="ECO:0007669"/>
    <property type="project" value="UniProtKB-UniRule"/>
</dbReference>
<dbReference type="GO" id="GO:0000049">
    <property type="term" value="F:tRNA binding"/>
    <property type="evidence" value="ECO:0007669"/>
    <property type="project" value="InterPro"/>
</dbReference>
<dbReference type="GO" id="GO:0008270">
    <property type="term" value="F:zinc ion binding"/>
    <property type="evidence" value="ECO:0007669"/>
    <property type="project" value="InterPro"/>
</dbReference>
<dbReference type="GO" id="GO:0006424">
    <property type="term" value="P:glutamyl-tRNA aminoacylation"/>
    <property type="evidence" value="ECO:0007669"/>
    <property type="project" value="UniProtKB-UniRule"/>
</dbReference>
<dbReference type="CDD" id="cd00808">
    <property type="entry name" value="GluRS_core"/>
    <property type="match status" value="1"/>
</dbReference>
<dbReference type="FunFam" id="3.40.50.620:FF:000007">
    <property type="entry name" value="Glutamate--tRNA ligase"/>
    <property type="match status" value="1"/>
</dbReference>
<dbReference type="Gene3D" id="1.10.10.350">
    <property type="match status" value="1"/>
</dbReference>
<dbReference type="Gene3D" id="3.40.50.620">
    <property type="entry name" value="HUPs"/>
    <property type="match status" value="1"/>
</dbReference>
<dbReference type="HAMAP" id="MF_00022">
    <property type="entry name" value="Glu_tRNA_synth_type1"/>
    <property type="match status" value="1"/>
</dbReference>
<dbReference type="InterPro" id="IPR045462">
    <property type="entry name" value="aa-tRNA-synth_I_cd-bd"/>
</dbReference>
<dbReference type="InterPro" id="IPR020751">
    <property type="entry name" value="aa-tRNA-synth_I_codon-bd_sub2"/>
</dbReference>
<dbReference type="InterPro" id="IPR008925">
    <property type="entry name" value="aa_tRNA-synth_I_cd-bd_sf"/>
</dbReference>
<dbReference type="InterPro" id="IPR004527">
    <property type="entry name" value="Glu-tRNA-ligase_bac/mito"/>
</dbReference>
<dbReference type="InterPro" id="IPR000924">
    <property type="entry name" value="Glu/Gln-tRNA-synth"/>
</dbReference>
<dbReference type="InterPro" id="IPR020058">
    <property type="entry name" value="Glu/Gln-tRNA-synth_Ib_cat-dom"/>
</dbReference>
<dbReference type="InterPro" id="IPR049940">
    <property type="entry name" value="GluQ/Sye"/>
</dbReference>
<dbReference type="InterPro" id="IPR033910">
    <property type="entry name" value="GluRS_core"/>
</dbReference>
<dbReference type="InterPro" id="IPR014729">
    <property type="entry name" value="Rossmann-like_a/b/a_fold"/>
</dbReference>
<dbReference type="NCBIfam" id="TIGR00464">
    <property type="entry name" value="gltX_bact"/>
    <property type="match status" value="1"/>
</dbReference>
<dbReference type="PANTHER" id="PTHR43311">
    <property type="entry name" value="GLUTAMATE--TRNA LIGASE"/>
    <property type="match status" value="1"/>
</dbReference>
<dbReference type="PANTHER" id="PTHR43311:SF2">
    <property type="entry name" value="GLUTAMATE--TRNA LIGASE, MITOCHONDRIAL-RELATED"/>
    <property type="match status" value="1"/>
</dbReference>
<dbReference type="Pfam" id="PF19269">
    <property type="entry name" value="Anticodon_2"/>
    <property type="match status" value="1"/>
</dbReference>
<dbReference type="Pfam" id="PF00749">
    <property type="entry name" value="tRNA-synt_1c"/>
    <property type="match status" value="1"/>
</dbReference>
<dbReference type="PRINTS" id="PR00987">
    <property type="entry name" value="TRNASYNTHGLU"/>
</dbReference>
<dbReference type="SUPFAM" id="SSF48163">
    <property type="entry name" value="An anticodon-binding domain of class I aminoacyl-tRNA synthetases"/>
    <property type="match status" value="1"/>
</dbReference>
<dbReference type="SUPFAM" id="SSF52374">
    <property type="entry name" value="Nucleotidylyl transferase"/>
    <property type="match status" value="1"/>
</dbReference>
<evidence type="ECO:0000255" key="1">
    <source>
        <dbReference type="HAMAP-Rule" id="MF_00022"/>
    </source>
</evidence>